<keyword id="KW-0002">3D-structure</keyword>
<keyword id="KW-0007">Acetylation</keyword>
<keyword id="KW-0012">Acyltransferase</keyword>
<keyword id="KW-0106">Calcium</keyword>
<keyword id="KW-0963">Cytoplasm</keyword>
<keyword id="KW-0903">Direct protein sequencing</keyword>
<keyword id="KW-0417">Keratinization</keyword>
<keyword id="KW-0479">Metal-binding</keyword>
<keyword id="KW-0597">Phosphoprotein</keyword>
<keyword id="KW-1267">Proteomics identification</keyword>
<keyword id="KW-1185">Reference proteome</keyword>
<keyword id="KW-0808">Transferase</keyword>
<keyword id="KW-0865">Zymogen</keyword>
<proteinExistence type="evidence at protein level"/>
<name>TGM3_HUMAN</name>
<organism>
    <name type="scientific">Homo sapiens</name>
    <name type="common">Human</name>
    <dbReference type="NCBI Taxonomy" id="9606"/>
    <lineage>
        <taxon>Eukaryota</taxon>
        <taxon>Metazoa</taxon>
        <taxon>Chordata</taxon>
        <taxon>Craniata</taxon>
        <taxon>Vertebrata</taxon>
        <taxon>Euteleostomi</taxon>
        <taxon>Mammalia</taxon>
        <taxon>Eutheria</taxon>
        <taxon>Euarchontoglires</taxon>
        <taxon>Primates</taxon>
        <taxon>Haplorrhini</taxon>
        <taxon>Catarrhini</taxon>
        <taxon>Hominidae</taxon>
        <taxon>Homo</taxon>
    </lineage>
</organism>
<accession>Q08188</accession>
<accession>A8K5N6</accession>
<accession>B2RCR6</accession>
<accession>D3DVX1</accession>
<accession>O95933</accession>
<accession>Q32ML9</accession>
<accession>Q32MM0</accession>
<protein>
    <recommendedName>
        <fullName>Protein-glutamine gamma-glutamyltransferase E</fullName>
        <ecNumber evidence="3 4 8">2.3.2.13</ecNumber>
    </recommendedName>
    <alternativeName>
        <fullName>Transglutaminase E</fullName>
        <shortName>TG(E)</shortName>
        <shortName>TGE</shortName>
        <shortName>TGase E</shortName>
    </alternativeName>
    <alternativeName>
        <fullName>Transglutaminase-3</fullName>
        <shortName>TGase-3</shortName>
    </alternativeName>
    <component>
        <recommendedName>
            <fullName>Protein-glutamine gamma-glutamyltransferase E 50 kDa catalytic chain</fullName>
        </recommendedName>
    </component>
    <component>
        <recommendedName>
            <fullName>Protein-glutamine gamma-glutamyltransferase E 27 kDa non-catalytic chain</fullName>
        </recommendedName>
    </component>
</protein>
<comment type="function">
    <text evidence="1">Catalyzes the calcium-dependent formation of isopeptide cross-links between glutamine and lysine residues in various proteins, as well as the conjugation of polyamines to proteins. Involved in the formation of the cornified envelope (CE), a specialized component consisting of covalent cross-links of proteins beneath the plasma membrane of terminally differentiated keratinocytes. Catalyzes small proline-rich proteins (SPRR1 and SPRR2) and LOR cross-linking to form small interchain oligomers, which are further cross-linked by TGM1 onto the growing CE scaffold (By similarity). In hair follicles, involved in cross-linking structural proteins to hardening the inner root sheath.</text>
</comment>
<comment type="catalytic activity">
    <reaction evidence="2 3 4 8">
        <text>L-glutaminyl-[protein] + L-lysyl-[protein] = [protein]-L-lysyl-N(6)-5-L-glutamyl-[protein] + NH4(+)</text>
        <dbReference type="Rhea" id="RHEA:54816"/>
        <dbReference type="Rhea" id="RHEA-COMP:9752"/>
        <dbReference type="Rhea" id="RHEA-COMP:10207"/>
        <dbReference type="Rhea" id="RHEA-COMP:14005"/>
        <dbReference type="ChEBI" id="CHEBI:28938"/>
        <dbReference type="ChEBI" id="CHEBI:29969"/>
        <dbReference type="ChEBI" id="CHEBI:30011"/>
        <dbReference type="ChEBI" id="CHEBI:138370"/>
        <dbReference type="EC" id="2.3.2.13"/>
    </reaction>
</comment>
<comment type="cofactor">
    <cofactor evidence="3 4">
        <name>Ca(2+)</name>
        <dbReference type="ChEBI" id="CHEBI:29108"/>
    </cofactor>
    <text evidence="3 4">Binds 3 Ca(2+) cations per subunit. Binds 1 Ca(2+) as a zymogen, and binds 2 more Ca(2+) cations, or other divalent metal cations, after proteolytic processing.</text>
</comment>
<comment type="subunit">
    <text evidence="3 4">Consists of two polypeptide chains, which are synthesized as a precursor form of a single polypeptide.</text>
</comment>
<comment type="interaction">
    <interactant intactId="EBI-1050019">
        <id>Q08188</id>
    </interactant>
    <interactant intactId="EBI-1772895">
        <id>Q9Y570</id>
        <label>PPME1</label>
    </interactant>
    <organismsDiffer>false</organismsDiffer>
    <experiments>2</experiments>
</comment>
<comment type="subcellular location">
    <subcellularLocation>
        <location evidence="8">Cytoplasm</location>
    </subcellularLocation>
</comment>
<comment type="PTM">
    <text evidence="7 9">Activated by proteolytic processing. In vitro activation is commonly achieved by cleavage with dispase, a neutral bacterial protease. Dispase cleavage site was proposed to lie between Ser-470 and Ser-471 (PubMed:8099584) or between Pro-465 and Phe-466 (PubMed:16565075). Physiological activation may be catalyzed by CTSL and, to a lesser extent, by CTSS, but not by CTSB, CTSD nor CTSV (PubMed:16565075).</text>
</comment>
<comment type="disease" evidence="8">
    <disease id="DI-04896">
        <name>Uncombable hair syndrome 2</name>
        <acronym>UHS2</acronym>
        <description>A form of uncombable hair syndrome, a condition characterized by scalp hair that is impossible to comb due to the haphazard arrangement of the hair bundles. A characteristic morphologic feature is a triangular to reniform to heart shape on cross-sections, and a groove, canal or flattening along the entire length of the hair. Most individuals are affected early in childhood and the hair takes on a spun-glass appearance with the hair becoming dry, curly, glossy, lighter in color, and progressively uncombable. The hair growth rate can range from slow to normal, and the condition improves with age.</description>
        <dbReference type="MIM" id="617251"/>
    </disease>
    <text>The disease is caused by variants affecting the gene represented in this entry.</text>
</comment>
<comment type="similarity">
    <text evidence="13">Belongs to the transglutaminase superfamily. Transglutaminase family.</text>
</comment>
<feature type="initiator methionine" description="Removed" evidence="12">
    <location>
        <position position="1"/>
    </location>
</feature>
<feature type="chain" id="PRO_0000033652" description="Protein-glutamine gamma-glutamyltransferase E 50 kDa catalytic chain">
    <location>
        <begin position="2"/>
        <end position="467"/>
    </location>
</feature>
<feature type="chain" id="PRO_0000033653" description="Protein-glutamine gamma-glutamyltransferase E 27 kDa non-catalytic chain">
    <location>
        <begin position="468"/>
        <end position="693"/>
    </location>
</feature>
<feature type="active site" evidence="2">
    <location>
        <position position="273"/>
    </location>
</feature>
<feature type="active site" evidence="2">
    <location>
        <position position="331"/>
    </location>
</feature>
<feature type="active site" evidence="2">
    <location>
        <position position="354"/>
    </location>
</feature>
<feature type="binding site" evidence="3 4">
    <location>
        <position position="222"/>
    </location>
    <ligand>
        <name>Ca(2+)</name>
        <dbReference type="ChEBI" id="CHEBI:29108"/>
        <label>1</label>
    </ligand>
</feature>
<feature type="binding site" evidence="3 4">
    <location>
        <position position="225"/>
    </location>
    <ligand>
        <name>Ca(2+)</name>
        <dbReference type="ChEBI" id="CHEBI:29108"/>
        <label>1</label>
    </ligand>
</feature>
<feature type="binding site" evidence="3 4">
    <location>
        <position position="227"/>
    </location>
    <ligand>
        <name>Ca(2+)</name>
        <dbReference type="ChEBI" id="CHEBI:29108"/>
        <label>1</label>
    </ligand>
</feature>
<feature type="binding site" evidence="3 4">
    <location>
        <position position="228"/>
    </location>
    <ligand>
        <name>Ca(2+)</name>
        <dbReference type="ChEBI" id="CHEBI:29108"/>
        <label>1</label>
    </ligand>
</feature>
<feature type="binding site" evidence="3 4">
    <location>
        <position position="230"/>
    </location>
    <ligand>
        <name>Ca(2+)</name>
        <dbReference type="ChEBI" id="CHEBI:29108"/>
        <label>1</label>
    </ligand>
</feature>
<feature type="binding site" evidence="3 4">
    <location>
        <position position="302"/>
    </location>
    <ligand>
        <name>Ca(2+)</name>
        <dbReference type="ChEBI" id="CHEBI:29108"/>
        <label>2</label>
    </ligand>
</feature>
<feature type="binding site" evidence="3 4">
    <location>
        <position position="304"/>
    </location>
    <ligand>
        <name>Ca(2+)</name>
        <dbReference type="ChEBI" id="CHEBI:29108"/>
        <label>2</label>
    </ligand>
</feature>
<feature type="binding site" evidence="3 4">
    <location>
        <position position="306"/>
    </location>
    <ligand>
        <name>Ca(2+)</name>
        <dbReference type="ChEBI" id="CHEBI:29108"/>
        <label>2</label>
    </ligand>
</feature>
<feature type="binding site" evidence="3 4">
    <location>
        <position position="308"/>
    </location>
    <ligand>
        <name>Ca(2+)</name>
        <dbReference type="ChEBI" id="CHEBI:29108"/>
        <label>2</label>
    </ligand>
</feature>
<feature type="binding site" evidence="3 4">
    <location>
        <position position="325"/>
    </location>
    <ligand>
        <name>Ca(2+)</name>
        <dbReference type="ChEBI" id="CHEBI:29108"/>
        <label>2</label>
    </ligand>
</feature>
<feature type="binding site" evidence="3 4">
    <location>
        <position position="394"/>
    </location>
    <ligand>
        <name>Ca(2+)</name>
        <dbReference type="ChEBI" id="CHEBI:29108"/>
        <label>3</label>
    </ligand>
</feature>
<feature type="binding site" evidence="3 4">
    <location>
        <position position="416"/>
    </location>
    <ligand>
        <name>Ca(2+)</name>
        <dbReference type="ChEBI" id="CHEBI:29108"/>
        <label>3</label>
    </ligand>
</feature>
<feature type="binding site" evidence="3 4">
    <location>
        <position position="444"/>
    </location>
    <ligand>
        <name>Ca(2+)</name>
        <dbReference type="ChEBI" id="CHEBI:29108"/>
        <label>3</label>
    </ligand>
</feature>
<feature type="binding site" evidence="3 4">
    <location>
        <position position="449"/>
    </location>
    <ligand>
        <name>Ca(2+)</name>
        <dbReference type="ChEBI" id="CHEBI:29108"/>
        <label>3</label>
    </ligand>
</feature>
<feature type="site" description="Cleavage; by CTSL">
    <location>
        <begin position="467"/>
        <end position="468"/>
    </location>
</feature>
<feature type="modified residue" description="N-acetylalanine" evidence="12">
    <location>
        <position position="2"/>
    </location>
</feature>
<feature type="modified residue" description="Phosphotyrosine" evidence="14">
    <location>
        <position position="111"/>
    </location>
</feature>
<feature type="modified residue" description="Phosphothreonine" evidence="14">
    <location>
        <position position="112"/>
    </location>
</feature>
<feature type="sequence variant" id="VAR_040067" description="In dbSNP:rs214803." evidence="5 6 9 10 11 12">
    <original>T</original>
    <variation>K</variation>
    <location>
        <position position="13"/>
    </location>
</feature>
<feature type="sequence variant" id="VAR_040068" description="In dbSNP:rs6048066." evidence="10">
    <original>I</original>
    <variation>L</variation>
    <location>
        <position position="163"/>
    </location>
</feature>
<feature type="sequence variant" id="VAR_040069" description="In dbSNP:rs214814." evidence="10">
    <original>S</original>
    <variation>N</variation>
    <location>
        <position position="249"/>
    </location>
</feature>
<feature type="sequence variant" id="VAR_040070" description="In dbSNP:rs1042617." evidence="9">
    <original>K</original>
    <variation>R</variation>
    <location>
        <position position="562"/>
    </location>
</feature>
<feature type="sequence variant" id="VAR_040071" description="In dbSNP:rs214830." evidence="5 6 9 10 11">
    <original>G</original>
    <variation>R</variation>
    <location>
        <position position="654"/>
    </location>
</feature>
<feature type="sequence variant" id="VAR_055360" description="In dbSNP:rs45581032." evidence="10">
    <original>L</original>
    <variation>M</variation>
    <location>
        <position position="687"/>
    </location>
</feature>
<feature type="sequence conflict" description="In Ref. 1; AAA61155." evidence="13" ref="1">
    <original>VS</original>
    <variation>DT</variation>
    <location>
        <begin position="58"/>
        <end position="59"/>
    </location>
</feature>
<feature type="sequence conflict" description="In Ref. 1; AAA61155." evidence="13" ref="1">
    <original>N</original>
    <variation>G</variation>
    <location>
        <position position="251"/>
    </location>
</feature>
<feature type="sequence conflict" description="In Ref. 2; BAF84040." evidence="13" ref="2">
    <original>S</original>
    <variation>G</variation>
    <location>
        <position position="324"/>
    </location>
</feature>
<feature type="sequence conflict" description="In Ref. 1; AAA61155." evidence="13" ref="1">
    <original>S</original>
    <variation>P</variation>
    <location>
        <position position="346"/>
    </location>
</feature>
<feature type="sequence conflict" description="In Ref. 2; BAF84040." evidence="13" ref="2">
    <original>D</original>
    <variation>G</variation>
    <location>
        <position position="674"/>
    </location>
</feature>
<feature type="strand" evidence="16">
    <location>
        <begin position="6"/>
        <end position="10"/>
    </location>
</feature>
<feature type="helix" evidence="16">
    <location>
        <begin position="13"/>
        <end position="19"/>
    </location>
</feature>
<feature type="strand" evidence="16">
    <location>
        <begin position="31"/>
        <end position="33"/>
    </location>
</feature>
<feature type="strand" evidence="16">
    <location>
        <begin position="38"/>
        <end position="46"/>
    </location>
</feature>
<feature type="strand" evidence="16">
    <location>
        <begin position="53"/>
        <end position="63"/>
    </location>
</feature>
<feature type="turn" evidence="16">
    <location>
        <begin position="66"/>
        <end position="69"/>
    </location>
</feature>
<feature type="strand" evidence="16">
    <location>
        <begin position="70"/>
        <end position="79"/>
    </location>
</feature>
<feature type="strand" evidence="16">
    <location>
        <begin position="82"/>
        <end position="92"/>
    </location>
</feature>
<feature type="strand" evidence="16">
    <location>
        <begin position="95"/>
        <end position="101"/>
    </location>
</feature>
<feature type="strand" evidence="16">
    <location>
        <begin position="109"/>
        <end position="119"/>
    </location>
</feature>
<feature type="strand" evidence="16">
    <location>
        <begin position="122"/>
        <end position="134"/>
    </location>
</feature>
<feature type="helix" evidence="16">
    <location>
        <begin position="149"/>
        <end position="155"/>
    </location>
</feature>
<feature type="strand" evidence="16">
    <location>
        <begin position="160"/>
        <end position="167"/>
    </location>
</feature>
<feature type="strand" evidence="16">
    <location>
        <begin position="170"/>
        <end position="177"/>
    </location>
</feature>
<feature type="helix" evidence="16">
    <location>
        <begin position="185"/>
        <end position="193"/>
    </location>
</feature>
<feature type="helix" evidence="16">
    <location>
        <begin position="197"/>
        <end position="201"/>
    </location>
</feature>
<feature type="helix" evidence="16">
    <location>
        <begin position="203"/>
        <end position="209"/>
    </location>
</feature>
<feature type="helix" evidence="16">
    <location>
        <begin position="213"/>
        <end position="223"/>
    </location>
</feature>
<feature type="turn" evidence="16">
    <location>
        <begin position="227"/>
        <end position="229"/>
    </location>
</feature>
<feature type="strand" evidence="16">
    <location>
        <begin position="232"/>
        <end position="235"/>
    </location>
</feature>
<feature type="helix" evidence="16">
    <location>
        <begin position="247"/>
        <end position="249"/>
    </location>
</feature>
<feature type="helix" evidence="16">
    <location>
        <begin position="254"/>
        <end position="262"/>
    </location>
</feature>
<feature type="strand" evidence="16">
    <location>
        <begin position="268"/>
        <end position="271"/>
    </location>
</feature>
<feature type="helix" evidence="16">
    <location>
        <begin position="273"/>
        <end position="287"/>
    </location>
</feature>
<feature type="strand" evidence="16">
    <location>
        <begin position="291"/>
        <end position="301"/>
    </location>
</feature>
<feature type="strand" evidence="16">
    <location>
        <begin position="303"/>
        <end position="313"/>
    </location>
</feature>
<feature type="turn" evidence="17">
    <location>
        <begin position="315"/>
        <end position="317"/>
    </location>
</feature>
<feature type="turn" evidence="18">
    <location>
        <begin position="322"/>
        <end position="325"/>
    </location>
</feature>
<feature type="strand" evidence="16">
    <location>
        <begin position="326"/>
        <end position="338"/>
    </location>
</feature>
<feature type="turn" evidence="16">
    <location>
        <begin position="341"/>
        <end position="343"/>
    </location>
</feature>
<feature type="helix" evidence="16">
    <location>
        <begin position="345"/>
        <end position="347"/>
    </location>
</feature>
<feature type="strand" evidence="16">
    <location>
        <begin position="349"/>
        <end position="353"/>
    </location>
</feature>
<feature type="strand" evidence="16">
    <location>
        <begin position="359"/>
        <end position="361"/>
    </location>
</feature>
<feature type="strand" evidence="18">
    <location>
        <begin position="364"/>
        <end position="371"/>
    </location>
</feature>
<feature type="helix" evidence="16">
    <location>
        <begin position="372"/>
        <end position="377"/>
    </location>
</feature>
<feature type="strand" evidence="16">
    <location>
        <begin position="382"/>
        <end position="384"/>
    </location>
</feature>
<feature type="helix" evidence="16">
    <location>
        <begin position="386"/>
        <end position="394"/>
    </location>
</feature>
<feature type="strand" evidence="16">
    <location>
        <begin position="396"/>
        <end position="403"/>
    </location>
</feature>
<feature type="turn" evidence="16">
    <location>
        <begin position="404"/>
        <end position="407"/>
    </location>
</feature>
<feature type="strand" evidence="16">
    <location>
        <begin position="408"/>
        <end position="426"/>
    </location>
</feature>
<feature type="strand" evidence="17">
    <location>
        <begin position="428"/>
        <end position="431"/>
    </location>
</feature>
<feature type="strand" evidence="16">
    <location>
        <begin position="433"/>
        <end position="435"/>
    </location>
</feature>
<feature type="helix" evidence="16">
    <location>
        <begin position="437"/>
        <end position="440"/>
    </location>
</feature>
<feature type="strand" evidence="15">
    <location>
        <begin position="444"/>
        <end position="446"/>
    </location>
</feature>
<feature type="helix" evidence="16">
    <location>
        <begin position="447"/>
        <end position="459"/>
    </location>
</feature>
<feature type="strand" evidence="16">
    <location>
        <begin position="482"/>
        <end position="489"/>
    </location>
</feature>
<feature type="strand" evidence="16">
    <location>
        <begin position="499"/>
        <end position="507"/>
    </location>
</feature>
<feature type="strand" evidence="16">
    <location>
        <begin position="509"/>
        <end position="511"/>
    </location>
</feature>
<feature type="strand" evidence="16">
    <location>
        <begin position="513"/>
        <end position="524"/>
    </location>
</feature>
<feature type="strand" evidence="16">
    <location>
        <begin position="530"/>
        <end position="543"/>
    </location>
</feature>
<feature type="strand" evidence="16">
    <location>
        <begin position="548"/>
        <end position="555"/>
    </location>
</feature>
<feature type="helix" evidence="16">
    <location>
        <begin position="557"/>
        <end position="560"/>
    </location>
</feature>
<feature type="turn" evidence="16">
    <location>
        <begin position="561"/>
        <end position="563"/>
    </location>
</feature>
<feature type="strand" evidence="16">
    <location>
        <begin position="569"/>
        <end position="577"/>
    </location>
</feature>
<feature type="strand" evidence="16">
    <location>
        <begin position="584"/>
        <end position="591"/>
    </location>
</feature>
<feature type="strand" evidence="16">
    <location>
        <begin position="597"/>
        <end position="603"/>
    </location>
</feature>
<feature type="strand" evidence="16">
    <location>
        <begin position="611"/>
        <end position="618"/>
    </location>
</feature>
<feature type="strand" evidence="16">
    <location>
        <begin position="621"/>
        <end position="623"/>
    </location>
</feature>
<feature type="strand" evidence="16">
    <location>
        <begin position="627"/>
        <end position="633"/>
    </location>
</feature>
<feature type="turn" evidence="16">
    <location>
        <begin position="635"/>
        <end position="637"/>
    </location>
</feature>
<feature type="strand" evidence="16">
    <location>
        <begin position="638"/>
        <end position="640"/>
    </location>
</feature>
<feature type="strand" evidence="16">
    <location>
        <begin position="642"/>
        <end position="646"/>
    </location>
</feature>
<feature type="strand" evidence="16">
    <location>
        <begin position="654"/>
        <end position="661"/>
    </location>
</feature>
<feature type="strand" evidence="16">
    <location>
        <begin position="667"/>
        <end position="677"/>
    </location>
</feature>
<feature type="strand" evidence="16">
    <location>
        <begin position="680"/>
        <end position="692"/>
    </location>
</feature>
<evidence type="ECO:0000250" key="1"/>
<evidence type="ECO:0000255" key="2">
    <source>
        <dbReference type="PROSITE-ProRule" id="PRU10024"/>
    </source>
</evidence>
<evidence type="ECO:0000269" key="3">
    <source>
    </source>
</evidence>
<evidence type="ECO:0000269" key="4">
    <source>
    </source>
</evidence>
<evidence type="ECO:0000269" key="5">
    <source>
    </source>
</evidence>
<evidence type="ECO:0000269" key="6">
    <source>
    </source>
</evidence>
<evidence type="ECO:0000269" key="7">
    <source>
    </source>
</evidence>
<evidence type="ECO:0000269" key="8">
    <source>
    </source>
</evidence>
<evidence type="ECO:0000269" key="9">
    <source>
    </source>
</evidence>
<evidence type="ECO:0000269" key="10">
    <source ref="3"/>
</evidence>
<evidence type="ECO:0000269" key="11">
    <source ref="5"/>
</evidence>
<evidence type="ECO:0000269" key="12">
    <source ref="7"/>
</evidence>
<evidence type="ECO:0000305" key="13"/>
<evidence type="ECO:0007744" key="14">
    <source>
    </source>
</evidence>
<evidence type="ECO:0007829" key="15">
    <source>
        <dbReference type="PDB" id="1NUF"/>
    </source>
</evidence>
<evidence type="ECO:0007829" key="16">
    <source>
        <dbReference type="PDB" id="8OXW"/>
    </source>
</evidence>
<evidence type="ECO:0007829" key="17">
    <source>
        <dbReference type="PDB" id="8OXX"/>
    </source>
</evidence>
<evidence type="ECO:0007829" key="18">
    <source>
        <dbReference type="PDB" id="8OXY"/>
    </source>
</evidence>
<sequence>MAALGVQSINWQTAFNRQAHHTDKFSSQELILRRGQNFQVLMIMNKGLGSNERLEFIVSTGPYPSESAMTKAVFPLSNGSSGGWSAVLQASNGNTLTISISSPASAPIGRYTMALQIFSQGGISSVKLGTFILLFNPWLNVDSVFMGNHAEREEYVQEDAGIIFVGSTNRIGMIGWNFGQFEEDILSICLSILDRSLNFRRDAATDVASRNDPKYVGRVLSAMINSNDDNGVLAGNWSGTYTGGRDPRSWNGSVEILKNWKKSGFSPVRYGQCWVFAGTLNTALRSLGIPSRVITNFNSAHDTDRNLSVDVYYDPMGNPLDKGSDSVWNFHVWNEGWFVRSDLGPSYGGWQVLDATPQERSQGVFQCGPASVIGVREGDVQLNFDMPFIFAEVNADRITWLYDNTTGKQWKNSVNSHTIGRYISTKAVGSNARMDVTDKYKYPEGSDQERQVFQKALGKLKPNTPFAATSSMGLETEEQEPSIIGKLKVAGMLAVGKEVNLVLLLKNLSRDTKTVTVNMTAWTIIYNGTLVHEVWKDSATMSLDPEEEAEHPIKISYAQYEKYLKSDNMIRITAVCKVPDESEVVVERDIILDNPTLTLEVLNEARVRKPVNVQMLFSNPLDEPVRDCVLMVEGSGLLLGNLKIDVPTLGPKEGSRVRFDILPSRSGTKQLLADFSCNKFPAIKAMLSIDVAE</sequence>
<reference key="1">
    <citation type="journal article" date="1993" name="J. Biol. Chem.">
        <title>The deduced sequence of the novel protransglutaminase E (TGase3) of human and mouse.</title>
        <authorList>
            <person name="Kim I.-G."/>
            <person name="Gorman J.J."/>
            <person name="Park S.-C."/>
            <person name="Chung S.-I."/>
            <person name="Steinert P.M."/>
        </authorList>
    </citation>
    <scope>NUCLEOTIDE SEQUENCE [MRNA]</scope>
    <scope>VARIANTS LYS-13; ARG-562 AND ARG-654</scope>
    <source>
        <tissue>Foreskin</tissue>
    </source>
</reference>
<reference key="2">
    <citation type="journal article" date="2004" name="Nat. Genet.">
        <title>Complete sequencing and characterization of 21,243 full-length human cDNAs.</title>
        <authorList>
            <person name="Ota T."/>
            <person name="Suzuki Y."/>
            <person name="Nishikawa T."/>
            <person name="Otsuki T."/>
            <person name="Sugiyama T."/>
            <person name="Irie R."/>
            <person name="Wakamatsu A."/>
            <person name="Hayashi K."/>
            <person name="Sato H."/>
            <person name="Nagai K."/>
            <person name="Kimura K."/>
            <person name="Makita H."/>
            <person name="Sekine M."/>
            <person name="Obayashi M."/>
            <person name="Nishi T."/>
            <person name="Shibahara T."/>
            <person name="Tanaka T."/>
            <person name="Ishii S."/>
            <person name="Yamamoto J."/>
            <person name="Saito K."/>
            <person name="Kawai Y."/>
            <person name="Isono Y."/>
            <person name="Nakamura Y."/>
            <person name="Nagahari K."/>
            <person name="Murakami K."/>
            <person name="Yasuda T."/>
            <person name="Iwayanagi T."/>
            <person name="Wagatsuma M."/>
            <person name="Shiratori A."/>
            <person name="Sudo H."/>
            <person name="Hosoiri T."/>
            <person name="Kaku Y."/>
            <person name="Kodaira H."/>
            <person name="Kondo H."/>
            <person name="Sugawara M."/>
            <person name="Takahashi M."/>
            <person name="Kanda K."/>
            <person name="Yokoi T."/>
            <person name="Furuya T."/>
            <person name="Kikkawa E."/>
            <person name="Omura Y."/>
            <person name="Abe K."/>
            <person name="Kamihara K."/>
            <person name="Katsuta N."/>
            <person name="Sato K."/>
            <person name="Tanikawa M."/>
            <person name="Yamazaki M."/>
            <person name="Ninomiya K."/>
            <person name="Ishibashi T."/>
            <person name="Yamashita H."/>
            <person name="Murakawa K."/>
            <person name="Fujimori K."/>
            <person name="Tanai H."/>
            <person name="Kimata M."/>
            <person name="Watanabe M."/>
            <person name="Hiraoka S."/>
            <person name="Chiba Y."/>
            <person name="Ishida S."/>
            <person name="Ono Y."/>
            <person name="Takiguchi S."/>
            <person name="Watanabe S."/>
            <person name="Yosida M."/>
            <person name="Hotuta T."/>
            <person name="Kusano J."/>
            <person name="Kanehori K."/>
            <person name="Takahashi-Fujii A."/>
            <person name="Hara H."/>
            <person name="Tanase T.-O."/>
            <person name="Nomura Y."/>
            <person name="Togiya S."/>
            <person name="Komai F."/>
            <person name="Hara R."/>
            <person name="Takeuchi K."/>
            <person name="Arita M."/>
            <person name="Imose N."/>
            <person name="Musashino K."/>
            <person name="Yuuki H."/>
            <person name="Oshima A."/>
            <person name="Sasaki N."/>
            <person name="Aotsuka S."/>
            <person name="Yoshikawa Y."/>
            <person name="Matsunawa H."/>
            <person name="Ichihara T."/>
            <person name="Shiohata N."/>
            <person name="Sano S."/>
            <person name="Moriya S."/>
            <person name="Momiyama H."/>
            <person name="Satoh N."/>
            <person name="Takami S."/>
            <person name="Terashima Y."/>
            <person name="Suzuki O."/>
            <person name="Nakagawa S."/>
            <person name="Senoh A."/>
            <person name="Mizoguchi H."/>
            <person name="Goto Y."/>
            <person name="Shimizu F."/>
            <person name="Wakebe H."/>
            <person name="Hishigaki H."/>
            <person name="Watanabe T."/>
            <person name="Sugiyama A."/>
            <person name="Takemoto M."/>
            <person name="Kawakami B."/>
            <person name="Yamazaki M."/>
            <person name="Watanabe K."/>
            <person name="Kumagai A."/>
            <person name="Itakura S."/>
            <person name="Fukuzumi Y."/>
            <person name="Fujimori Y."/>
            <person name="Komiyama M."/>
            <person name="Tashiro H."/>
            <person name="Tanigami A."/>
            <person name="Fujiwara T."/>
            <person name="Ono T."/>
            <person name="Yamada K."/>
            <person name="Fujii Y."/>
            <person name="Ozaki K."/>
            <person name="Hirao M."/>
            <person name="Ohmori Y."/>
            <person name="Kawabata A."/>
            <person name="Hikiji T."/>
            <person name="Kobatake N."/>
            <person name="Inagaki H."/>
            <person name="Ikema Y."/>
            <person name="Okamoto S."/>
            <person name="Okitani R."/>
            <person name="Kawakami T."/>
            <person name="Noguchi S."/>
            <person name="Itoh T."/>
            <person name="Shigeta K."/>
            <person name="Senba T."/>
            <person name="Matsumura K."/>
            <person name="Nakajima Y."/>
            <person name="Mizuno T."/>
            <person name="Morinaga M."/>
            <person name="Sasaki M."/>
            <person name="Togashi T."/>
            <person name="Oyama M."/>
            <person name="Hata H."/>
            <person name="Watanabe M."/>
            <person name="Komatsu T."/>
            <person name="Mizushima-Sugano J."/>
            <person name="Satoh T."/>
            <person name="Shirai Y."/>
            <person name="Takahashi Y."/>
            <person name="Nakagawa K."/>
            <person name="Okumura K."/>
            <person name="Nagase T."/>
            <person name="Nomura N."/>
            <person name="Kikuchi H."/>
            <person name="Masuho Y."/>
            <person name="Yamashita R."/>
            <person name="Nakai K."/>
            <person name="Yada T."/>
            <person name="Nakamura Y."/>
            <person name="Ohara O."/>
            <person name="Isogai T."/>
            <person name="Sugano S."/>
        </authorList>
    </citation>
    <scope>NUCLEOTIDE SEQUENCE [LARGE SCALE MRNA]</scope>
    <scope>VARIANTS LYS-13 AND ARG-654</scope>
    <source>
        <tissue>Tongue</tissue>
    </source>
</reference>
<reference key="3">
    <citation type="submission" date="2006-11" db="EMBL/GenBank/DDBJ databases">
        <authorList>
            <consortium name="NIEHS SNPs program"/>
        </authorList>
    </citation>
    <scope>NUCLEOTIDE SEQUENCE [GENOMIC DNA]</scope>
    <scope>VARIANTS LYS-13; LEU-163; ASN-249; ARG-654 AND MET-687</scope>
</reference>
<reference key="4">
    <citation type="journal article" date="2001" name="Nature">
        <title>The DNA sequence and comparative analysis of human chromosome 20.</title>
        <authorList>
            <person name="Deloukas P."/>
            <person name="Matthews L.H."/>
            <person name="Ashurst J.L."/>
            <person name="Burton J."/>
            <person name="Gilbert J.G.R."/>
            <person name="Jones M."/>
            <person name="Stavrides G."/>
            <person name="Almeida J.P."/>
            <person name="Babbage A.K."/>
            <person name="Bagguley C.L."/>
            <person name="Bailey J."/>
            <person name="Barlow K.F."/>
            <person name="Bates K.N."/>
            <person name="Beard L.M."/>
            <person name="Beare D.M."/>
            <person name="Beasley O.P."/>
            <person name="Bird C.P."/>
            <person name="Blakey S.E."/>
            <person name="Bridgeman A.M."/>
            <person name="Brown A.J."/>
            <person name="Buck D."/>
            <person name="Burrill W.D."/>
            <person name="Butler A.P."/>
            <person name="Carder C."/>
            <person name="Carter N.P."/>
            <person name="Chapman J.C."/>
            <person name="Clamp M."/>
            <person name="Clark G."/>
            <person name="Clark L.N."/>
            <person name="Clark S.Y."/>
            <person name="Clee C.M."/>
            <person name="Clegg S."/>
            <person name="Cobley V.E."/>
            <person name="Collier R.E."/>
            <person name="Connor R.E."/>
            <person name="Corby N.R."/>
            <person name="Coulson A."/>
            <person name="Coville G.J."/>
            <person name="Deadman R."/>
            <person name="Dhami P.D."/>
            <person name="Dunn M."/>
            <person name="Ellington A.G."/>
            <person name="Frankland J.A."/>
            <person name="Fraser A."/>
            <person name="French L."/>
            <person name="Garner P."/>
            <person name="Grafham D.V."/>
            <person name="Griffiths C."/>
            <person name="Griffiths M.N.D."/>
            <person name="Gwilliam R."/>
            <person name="Hall R.E."/>
            <person name="Hammond S."/>
            <person name="Harley J.L."/>
            <person name="Heath P.D."/>
            <person name="Ho S."/>
            <person name="Holden J.L."/>
            <person name="Howden P.J."/>
            <person name="Huckle E."/>
            <person name="Hunt A.R."/>
            <person name="Hunt S.E."/>
            <person name="Jekosch K."/>
            <person name="Johnson C.M."/>
            <person name="Johnson D."/>
            <person name="Kay M.P."/>
            <person name="Kimberley A.M."/>
            <person name="King A."/>
            <person name="Knights A."/>
            <person name="Laird G.K."/>
            <person name="Lawlor S."/>
            <person name="Lehvaeslaiho M.H."/>
            <person name="Leversha M.A."/>
            <person name="Lloyd C."/>
            <person name="Lloyd D.M."/>
            <person name="Lovell J.D."/>
            <person name="Marsh V.L."/>
            <person name="Martin S.L."/>
            <person name="McConnachie L.J."/>
            <person name="McLay K."/>
            <person name="McMurray A.A."/>
            <person name="Milne S.A."/>
            <person name="Mistry D."/>
            <person name="Moore M.J.F."/>
            <person name="Mullikin J.C."/>
            <person name="Nickerson T."/>
            <person name="Oliver K."/>
            <person name="Parker A."/>
            <person name="Patel R."/>
            <person name="Pearce T.A.V."/>
            <person name="Peck A.I."/>
            <person name="Phillimore B.J.C.T."/>
            <person name="Prathalingam S.R."/>
            <person name="Plumb R.W."/>
            <person name="Ramsay H."/>
            <person name="Rice C.M."/>
            <person name="Ross M.T."/>
            <person name="Scott C.E."/>
            <person name="Sehra H.K."/>
            <person name="Shownkeen R."/>
            <person name="Sims S."/>
            <person name="Skuce C.D."/>
            <person name="Smith M.L."/>
            <person name="Soderlund C."/>
            <person name="Steward C.A."/>
            <person name="Sulston J.E."/>
            <person name="Swann R.M."/>
            <person name="Sycamore N."/>
            <person name="Taylor R."/>
            <person name="Tee L."/>
            <person name="Thomas D.W."/>
            <person name="Thorpe A."/>
            <person name="Tracey A."/>
            <person name="Tromans A.C."/>
            <person name="Vaudin M."/>
            <person name="Wall M."/>
            <person name="Wallis J.M."/>
            <person name="Whitehead S.L."/>
            <person name="Whittaker P."/>
            <person name="Willey D.L."/>
            <person name="Williams L."/>
            <person name="Williams S.A."/>
            <person name="Wilming L."/>
            <person name="Wray P.W."/>
            <person name="Hubbard T."/>
            <person name="Durbin R.M."/>
            <person name="Bentley D.R."/>
            <person name="Beck S."/>
            <person name="Rogers J."/>
        </authorList>
    </citation>
    <scope>NUCLEOTIDE SEQUENCE [LARGE SCALE GENOMIC DNA]</scope>
</reference>
<reference key="5">
    <citation type="submission" date="2005-09" db="EMBL/GenBank/DDBJ databases">
        <authorList>
            <person name="Mural R.J."/>
            <person name="Istrail S."/>
            <person name="Sutton G.G."/>
            <person name="Florea L."/>
            <person name="Halpern A.L."/>
            <person name="Mobarry C.M."/>
            <person name="Lippert R."/>
            <person name="Walenz B."/>
            <person name="Shatkay H."/>
            <person name="Dew I."/>
            <person name="Miller J.R."/>
            <person name="Flanigan M.J."/>
            <person name="Edwards N.J."/>
            <person name="Bolanos R."/>
            <person name="Fasulo D."/>
            <person name="Halldorsson B.V."/>
            <person name="Hannenhalli S."/>
            <person name="Turner R."/>
            <person name="Yooseph S."/>
            <person name="Lu F."/>
            <person name="Nusskern D.R."/>
            <person name="Shue B.C."/>
            <person name="Zheng X.H."/>
            <person name="Zhong F."/>
            <person name="Delcher A.L."/>
            <person name="Huson D.H."/>
            <person name="Kravitz S.A."/>
            <person name="Mouchard L."/>
            <person name="Reinert K."/>
            <person name="Remington K.A."/>
            <person name="Clark A.G."/>
            <person name="Waterman M.S."/>
            <person name="Eichler E.E."/>
            <person name="Adams M.D."/>
            <person name="Hunkapiller M.W."/>
            <person name="Myers E.W."/>
            <person name="Venter J.C."/>
        </authorList>
    </citation>
    <scope>NUCLEOTIDE SEQUENCE [LARGE SCALE GENOMIC DNA]</scope>
    <scope>VARIANTS LYS-13 AND ARG-654</scope>
</reference>
<reference key="6">
    <citation type="journal article" date="2004" name="Genome Res.">
        <title>The status, quality, and expansion of the NIH full-length cDNA project: the Mammalian Gene Collection (MGC).</title>
        <authorList>
            <consortium name="The MGC Project Team"/>
        </authorList>
    </citation>
    <scope>NUCLEOTIDE SEQUENCE [LARGE SCALE MRNA]</scope>
    <scope>VARIANTS LYS-13 AND ARG-654</scope>
</reference>
<reference key="7">
    <citation type="submission" date="2008-02" db="UniProtKB">
        <authorList>
            <person name="Bienvenut W.V."/>
            <person name="Bensaad K."/>
            <person name="Vousden K.H."/>
        </authorList>
    </citation>
    <scope>PROTEIN SEQUENCE OF 2-13 AND 670-684</scope>
    <scope>VARIANT LYS-13</scope>
    <scope>CLEAVAGE OF INITIATOR METHIONINE</scope>
    <scope>ACETYLATION AT ALA-2</scope>
    <scope>IDENTIFICATION BY MASS SPECTROMETRY</scope>
    <source>
        <tissue>Osteosarcoma</tissue>
    </source>
</reference>
<reference key="8">
    <citation type="journal article" date="2006" name="J. Biol. Chem.">
        <title>Cystatin M/E is a high affinity inhibitor of cathepsin V and cathepsin L by a reactive site that is distinct from the legumain-binding site. A novel clue for the role of cystatin M/E in epidermal cornification.</title>
        <authorList>
            <person name="Cheng T."/>
            <person name="Hitomi K."/>
            <person name="van Vlijmen-Willems I.M."/>
            <person name="de Jongh G.J."/>
            <person name="Yamamoto K."/>
            <person name="Nishi K."/>
            <person name="Watts C."/>
            <person name="Reinheckel T."/>
            <person name="Schalkwijk J."/>
            <person name="Zeeuwen P.L."/>
        </authorList>
    </citation>
    <scope>PROTEIN SEQUENCE OF 468-479</scope>
    <scope>PROTEOLYTIC CLEAVAGE BY CTSL</scope>
</reference>
<reference key="9">
    <citation type="journal article" date="2009" name="Sci. Signal.">
        <title>Quantitative phosphoproteomic analysis of T cell receptor signaling reveals system-wide modulation of protein-protein interactions.</title>
        <authorList>
            <person name="Mayya V."/>
            <person name="Lundgren D.H."/>
            <person name="Hwang S.-I."/>
            <person name="Rezaul K."/>
            <person name="Wu L."/>
            <person name="Eng J.K."/>
            <person name="Rodionov V."/>
            <person name="Han D.K."/>
        </authorList>
    </citation>
    <scope>PHOSPHORYLATION [LARGE SCALE ANALYSIS] AT TYR-111 AND THR-112</scope>
    <scope>IDENTIFICATION BY MASS SPECTROMETRY [LARGE SCALE ANALYSIS]</scope>
    <source>
        <tissue>Leukemic T-cell</tissue>
    </source>
</reference>
<reference key="10">
    <citation type="journal article" date="2011" name="BMC Syst. Biol.">
        <title>Initial characterization of the human central proteome.</title>
        <authorList>
            <person name="Burkard T.R."/>
            <person name="Planyavsky M."/>
            <person name="Kaupe I."/>
            <person name="Breitwieser F.P."/>
            <person name="Buerckstuemmer T."/>
            <person name="Bennett K.L."/>
            <person name="Superti-Furga G."/>
            <person name="Colinge J."/>
        </authorList>
    </citation>
    <scope>IDENTIFICATION BY MASS SPECTROMETRY [LARGE SCALE ANALYSIS]</scope>
</reference>
<reference key="11">
    <citation type="journal article" date="2016" name="Am. J. Hum. Genet.">
        <title>Mutations in three genes encoding proteins involved in hair shaft formation cause uncombable hair syndrome.</title>
        <authorList>
            <person name="Ue Basmanav F.B."/>
            <person name="Cau L."/>
            <person name="Tafazzoli A."/>
            <person name="Mechin M.C."/>
            <person name="Wolf S."/>
            <person name="Romano M.T."/>
            <person name="Valentin F."/>
            <person name="Wiegmann H."/>
            <person name="Huchenq A."/>
            <person name="Kandil R."/>
            <person name="Garcia Bartels N."/>
            <person name="Kilic A."/>
            <person name="George S."/>
            <person name="Ralser D.J."/>
            <person name="Bergner S."/>
            <person name="Ferguson D.J."/>
            <person name="Oprisoreanu A.M."/>
            <person name="Wehner M."/>
            <person name="Thiele H."/>
            <person name="Altmueller J."/>
            <person name="Nuernberg P."/>
            <person name="Swan D."/>
            <person name="Houniet D."/>
            <person name="Buechner A."/>
            <person name="Weibel L."/>
            <person name="Wagner N."/>
            <person name="Grimalt R."/>
            <person name="Bygum A."/>
            <person name="Serre G."/>
            <person name="Blume-Peytavi U."/>
            <person name="Sprecher E."/>
            <person name="Schoch S."/>
            <person name="Oji V."/>
            <person name="Hamm H."/>
            <person name="Farrant P."/>
            <person name="Simon M."/>
            <person name="Betz R.C."/>
        </authorList>
    </citation>
    <scope>INVOLVEMENT IN UHS2</scope>
    <scope>SUBCELLULAR LOCATION</scope>
    <scope>CATALYTIC ACTIVITY</scope>
</reference>
<reference key="12">
    <citation type="journal article" date="2002" name="EMBO J.">
        <title>Three-dimensional structure of the human transglutaminase 3 enzyme: binding of calcium ions changes structure for activation.</title>
        <authorList>
            <person name="Ahvazi B."/>
            <person name="Kim H.C."/>
            <person name="Kee S.H."/>
            <person name="Nemes Z."/>
            <person name="Steinert P.M."/>
        </authorList>
    </citation>
    <scope>X-RAY CRYSTALLOGRAPHY (2.10 ANGSTROMS) OF 2-693 IN COMPLEX WITH CALCIUM</scope>
    <scope>COFACTOR</scope>
    <scope>CATALYTIC ACTIVITY</scope>
</reference>
<reference key="13">
    <citation type="journal article" date="2003" name="J. Biol. Chem.">
        <title>Roles of calcium ions in the activation and activity of the transglutaminase 3 enzyme.</title>
        <authorList>
            <person name="Ahvazi B."/>
            <person name="Boeshans K.M."/>
            <person name="Idler W."/>
            <person name="Baxa U."/>
            <person name="Steinert P.M."/>
        </authorList>
    </citation>
    <scope>X-RAY CRYSTALLOGRAPHY (2.40 ANGSTROMS) OF 2-693 IN COMPLEX WITH CALCIUM AND MAGNESIUM</scope>
    <scope>COFACTOR</scope>
    <scope>CATALYTIC ACTIVITY</scope>
</reference>
<dbReference type="EC" id="2.3.2.13" evidence="3 4 8"/>
<dbReference type="EMBL" id="L10386">
    <property type="protein sequence ID" value="AAA61155.1"/>
    <property type="molecule type" value="mRNA"/>
</dbReference>
<dbReference type="EMBL" id="AK290324">
    <property type="protein sequence ID" value="BAF83013.1"/>
    <property type="molecule type" value="mRNA"/>
</dbReference>
<dbReference type="EMBL" id="AK291351">
    <property type="protein sequence ID" value="BAF84040.1"/>
    <property type="molecule type" value="mRNA"/>
</dbReference>
<dbReference type="EMBL" id="AK315236">
    <property type="protein sequence ID" value="BAG37663.1"/>
    <property type="molecule type" value="mRNA"/>
</dbReference>
<dbReference type="EMBL" id="EF102483">
    <property type="protein sequence ID" value="ABK41960.1"/>
    <property type="molecule type" value="Genomic_DNA"/>
</dbReference>
<dbReference type="EMBL" id="AL031678">
    <property type="status" value="NOT_ANNOTATED_CDS"/>
    <property type="molecule type" value="Genomic_DNA"/>
</dbReference>
<dbReference type="EMBL" id="CH471133">
    <property type="protein sequence ID" value="EAX10601.1"/>
    <property type="molecule type" value="Genomic_DNA"/>
</dbReference>
<dbReference type="EMBL" id="CH471133">
    <property type="protein sequence ID" value="EAX10602.1"/>
    <property type="molecule type" value="Genomic_DNA"/>
</dbReference>
<dbReference type="EMBL" id="BC109075">
    <property type="protein sequence ID" value="AAI09076.1"/>
    <property type="molecule type" value="mRNA"/>
</dbReference>
<dbReference type="EMBL" id="BC109076">
    <property type="protein sequence ID" value="AAI09077.1"/>
    <property type="molecule type" value="mRNA"/>
</dbReference>
<dbReference type="CCDS" id="CCDS33435.1"/>
<dbReference type="PIR" id="A45991">
    <property type="entry name" value="A45991"/>
</dbReference>
<dbReference type="RefSeq" id="NP_003236.3">
    <property type="nucleotide sequence ID" value="NM_003245.3"/>
</dbReference>
<dbReference type="PDB" id="1L9M">
    <property type="method" value="X-ray"/>
    <property type="resolution" value="2.10 A"/>
    <property type="chains" value="A/B=2-693"/>
</dbReference>
<dbReference type="PDB" id="1L9N">
    <property type="method" value="X-ray"/>
    <property type="resolution" value="2.10 A"/>
    <property type="chains" value="A/B=2-693"/>
</dbReference>
<dbReference type="PDB" id="1NUD">
    <property type="method" value="X-ray"/>
    <property type="resolution" value="2.70 A"/>
    <property type="chains" value="A/B=2-693"/>
</dbReference>
<dbReference type="PDB" id="1NUF">
    <property type="method" value="X-ray"/>
    <property type="resolution" value="2.70 A"/>
    <property type="chains" value="A=2-693"/>
</dbReference>
<dbReference type="PDB" id="1NUG">
    <property type="method" value="X-ray"/>
    <property type="resolution" value="2.40 A"/>
    <property type="chains" value="A/B=2-693"/>
</dbReference>
<dbReference type="PDB" id="8OXV">
    <property type="method" value="X-ray"/>
    <property type="resolution" value="1.80 A"/>
    <property type="chains" value="A=1-693"/>
</dbReference>
<dbReference type="PDB" id="8OXW">
    <property type="method" value="X-ray"/>
    <property type="resolution" value="1.70 A"/>
    <property type="chains" value="A=1-693"/>
</dbReference>
<dbReference type="PDB" id="8OXX">
    <property type="method" value="X-ray"/>
    <property type="resolution" value="2.50 A"/>
    <property type="chains" value="A=2-461"/>
</dbReference>
<dbReference type="PDB" id="8OXY">
    <property type="method" value="X-ray"/>
    <property type="resolution" value="2.00 A"/>
    <property type="chains" value="A=1-693"/>
</dbReference>
<dbReference type="PDB" id="8RMX">
    <property type="method" value="X-ray"/>
    <property type="resolution" value="2.80 A"/>
    <property type="chains" value="A/D=1-464"/>
</dbReference>
<dbReference type="PDB" id="8RMY">
    <property type="method" value="X-ray"/>
    <property type="resolution" value="2.90 A"/>
    <property type="chains" value="A/D=1-464"/>
</dbReference>
<dbReference type="PDBsum" id="1L9M"/>
<dbReference type="PDBsum" id="1L9N"/>
<dbReference type="PDBsum" id="1NUD"/>
<dbReference type="PDBsum" id="1NUF"/>
<dbReference type="PDBsum" id="1NUG"/>
<dbReference type="PDBsum" id="8OXV"/>
<dbReference type="PDBsum" id="8OXW"/>
<dbReference type="PDBsum" id="8OXX"/>
<dbReference type="PDBsum" id="8OXY"/>
<dbReference type="PDBsum" id="8RMX"/>
<dbReference type="PDBsum" id="8RMY"/>
<dbReference type="SMR" id="Q08188"/>
<dbReference type="BioGRID" id="112911">
    <property type="interactions" value="184"/>
</dbReference>
<dbReference type="FunCoup" id="Q08188">
    <property type="interactions" value="397"/>
</dbReference>
<dbReference type="IntAct" id="Q08188">
    <property type="interactions" value="95"/>
</dbReference>
<dbReference type="MINT" id="Q08188"/>
<dbReference type="STRING" id="9606.ENSP00000370867"/>
<dbReference type="BindingDB" id="Q08188"/>
<dbReference type="ChEMBL" id="CHEMBL3363"/>
<dbReference type="DrugBank" id="DB01864">
    <property type="generic name" value="5'-Guanosine-Diphosphate-Monothiophosphate"/>
</dbReference>
<dbReference type="DrugBank" id="DB03152">
    <property type="generic name" value="B-2-Octylglucoside"/>
</dbReference>
<dbReference type="DrugBank" id="DB04315">
    <property type="generic name" value="Guanosine-5'-Diphosphate"/>
</dbReference>
<dbReference type="DrugBank" id="DB01972">
    <property type="generic name" value="Guanosine-5'-Monophosphate"/>
</dbReference>
<dbReference type="DrugBank" id="DB00130">
    <property type="generic name" value="L-Glutamine"/>
</dbReference>
<dbReference type="GlyGen" id="Q08188">
    <property type="glycosylation" value="1 site, 1 O-linked glycan (1 site)"/>
</dbReference>
<dbReference type="iPTMnet" id="Q08188"/>
<dbReference type="PhosphoSitePlus" id="Q08188"/>
<dbReference type="SwissPalm" id="Q08188"/>
<dbReference type="BioMuta" id="TGM3"/>
<dbReference type="DMDM" id="257051080"/>
<dbReference type="jPOST" id="Q08188"/>
<dbReference type="MassIVE" id="Q08188"/>
<dbReference type="PaxDb" id="9606-ENSP00000370867"/>
<dbReference type="PeptideAtlas" id="Q08188"/>
<dbReference type="PRIDE" id="Q08188"/>
<dbReference type="ProteomicsDB" id="58578"/>
<dbReference type="TopDownProteomics" id="Q08188"/>
<dbReference type="Antibodypedia" id="1375">
    <property type="antibodies" value="311 antibodies from 31 providers"/>
</dbReference>
<dbReference type="DNASU" id="7053"/>
<dbReference type="Ensembl" id="ENST00000381458.6">
    <property type="protein sequence ID" value="ENSP00000370867.5"/>
    <property type="gene ID" value="ENSG00000125780.12"/>
</dbReference>
<dbReference type="GeneID" id="7053"/>
<dbReference type="KEGG" id="hsa:7053"/>
<dbReference type="MANE-Select" id="ENST00000381458.6">
    <property type="protein sequence ID" value="ENSP00000370867.5"/>
    <property type="RefSeq nucleotide sequence ID" value="NM_003245.4"/>
    <property type="RefSeq protein sequence ID" value="NP_003236.3"/>
</dbReference>
<dbReference type="UCSC" id="uc002wfx.5">
    <property type="organism name" value="human"/>
</dbReference>
<dbReference type="AGR" id="HGNC:11779"/>
<dbReference type="CTD" id="7053"/>
<dbReference type="DisGeNET" id="7053"/>
<dbReference type="GeneCards" id="TGM3"/>
<dbReference type="HGNC" id="HGNC:11779">
    <property type="gene designation" value="TGM3"/>
</dbReference>
<dbReference type="HPA" id="ENSG00000125780">
    <property type="expression patterns" value="Tissue enriched (esophagus)"/>
</dbReference>
<dbReference type="MalaCards" id="TGM3"/>
<dbReference type="MIM" id="600238">
    <property type="type" value="gene"/>
</dbReference>
<dbReference type="MIM" id="617251">
    <property type="type" value="phenotype"/>
</dbReference>
<dbReference type="neXtProt" id="NX_Q08188"/>
<dbReference type="OpenTargets" id="ENSG00000125780"/>
<dbReference type="Orphanet" id="1410">
    <property type="disease" value="Uncombable hair syndrome"/>
</dbReference>
<dbReference type="PharmGKB" id="PA36492"/>
<dbReference type="VEuPathDB" id="HostDB:ENSG00000125780"/>
<dbReference type="eggNOG" id="ENOG502QUPB">
    <property type="taxonomic scope" value="Eukaryota"/>
</dbReference>
<dbReference type="GeneTree" id="ENSGT01050000244866"/>
<dbReference type="HOGENOM" id="CLU_013435_1_0_1"/>
<dbReference type="InParanoid" id="Q08188"/>
<dbReference type="OMA" id="SMVGWNF"/>
<dbReference type="OrthoDB" id="437511at2759"/>
<dbReference type="PAN-GO" id="Q08188">
    <property type="GO annotations" value="2 GO annotations based on evolutionary models"/>
</dbReference>
<dbReference type="PhylomeDB" id="Q08188"/>
<dbReference type="TreeFam" id="TF324278"/>
<dbReference type="BRENDA" id="2.3.2.13">
    <property type="organism ID" value="2681"/>
</dbReference>
<dbReference type="PathwayCommons" id="Q08188"/>
<dbReference type="SignaLink" id="Q08188"/>
<dbReference type="BioGRID-ORCS" id="7053">
    <property type="hits" value="4 hits in 1142 CRISPR screens"/>
</dbReference>
<dbReference type="ChiTaRS" id="TGM3">
    <property type="organism name" value="human"/>
</dbReference>
<dbReference type="EvolutionaryTrace" id="Q08188"/>
<dbReference type="GeneWiki" id="TGM3"/>
<dbReference type="GenomeRNAi" id="7053"/>
<dbReference type="Pharos" id="Q08188">
    <property type="development level" value="Tchem"/>
</dbReference>
<dbReference type="PRO" id="PR:Q08188"/>
<dbReference type="Proteomes" id="UP000005640">
    <property type="component" value="Chromosome 20"/>
</dbReference>
<dbReference type="RNAct" id="Q08188">
    <property type="molecule type" value="protein"/>
</dbReference>
<dbReference type="Bgee" id="ENSG00000125780">
    <property type="expression patterns" value="Expressed in lower esophagus mucosa and 83 other cell types or tissues"/>
</dbReference>
<dbReference type="GO" id="GO:0005737">
    <property type="term" value="C:cytoplasm"/>
    <property type="evidence" value="ECO:0000314"/>
    <property type="project" value="UniProtKB"/>
</dbReference>
<dbReference type="GO" id="GO:0070062">
    <property type="term" value="C:extracellular exosome"/>
    <property type="evidence" value="ECO:0007005"/>
    <property type="project" value="UniProtKB"/>
</dbReference>
<dbReference type="GO" id="GO:0031234">
    <property type="term" value="C:extrinsic component of cytoplasmic side of plasma membrane"/>
    <property type="evidence" value="ECO:0000314"/>
    <property type="project" value="UniProtKB"/>
</dbReference>
<dbReference type="GO" id="GO:0032991">
    <property type="term" value="C:protein-containing complex"/>
    <property type="evidence" value="ECO:0000314"/>
    <property type="project" value="UniProtKB"/>
</dbReference>
<dbReference type="GO" id="GO:0016746">
    <property type="term" value="F:acyltransferase activity"/>
    <property type="evidence" value="ECO:0000304"/>
    <property type="project" value="UniProtKB"/>
</dbReference>
<dbReference type="GO" id="GO:0005509">
    <property type="term" value="F:calcium ion binding"/>
    <property type="evidence" value="ECO:0000314"/>
    <property type="project" value="UniProtKB"/>
</dbReference>
<dbReference type="GO" id="GO:0003824">
    <property type="term" value="F:catalytic activity"/>
    <property type="evidence" value="ECO:0000314"/>
    <property type="project" value="UniProtKB"/>
</dbReference>
<dbReference type="GO" id="GO:0003810">
    <property type="term" value="F:protein-glutamine gamma-glutamyltransferase activity"/>
    <property type="evidence" value="ECO:0000314"/>
    <property type="project" value="UniProtKB"/>
</dbReference>
<dbReference type="GO" id="GO:0005198">
    <property type="term" value="F:structural molecule activity"/>
    <property type="evidence" value="ECO:0000314"/>
    <property type="project" value="UniProtKB"/>
</dbReference>
<dbReference type="GO" id="GO:0031069">
    <property type="term" value="P:hair follicle morphogenesis"/>
    <property type="evidence" value="ECO:0000304"/>
    <property type="project" value="UniProtKB"/>
</dbReference>
<dbReference type="GO" id="GO:0031424">
    <property type="term" value="P:keratinization"/>
    <property type="evidence" value="ECO:0007669"/>
    <property type="project" value="UniProtKB-KW"/>
</dbReference>
<dbReference type="GO" id="GO:0030216">
    <property type="term" value="P:keratinocyte differentiation"/>
    <property type="evidence" value="ECO:0000270"/>
    <property type="project" value="UniProtKB"/>
</dbReference>
<dbReference type="GO" id="GO:0018149">
    <property type="term" value="P:peptide cross-linking"/>
    <property type="evidence" value="ECO:0000314"/>
    <property type="project" value="UniProtKB"/>
</dbReference>
<dbReference type="GO" id="GO:0036211">
    <property type="term" value="P:protein modification process"/>
    <property type="evidence" value="ECO:0000303"/>
    <property type="project" value="UniProtKB"/>
</dbReference>
<dbReference type="FunFam" id="2.60.40.10:FF:000090">
    <property type="entry name" value="Protein-glutamine gamma-glutamyltransferase 2"/>
    <property type="match status" value="1"/>
</dbReference>
<dbReference type="FunFam" id="2.60.40.10:FF:000278">
    <property type="entry name" value="Protein-glutamine gamma-glutamyltransferase 2"/>
    <property type="match status" value="1"/>
</dbReference>
<dbReference type="FunFam" id="3.90.260.10:FF:000001">
    <property type="entry name" value="Protein-glutamine gamma-glutamyltransferase 2"/>
    <property type="match status" value="1"/>
</dbReference>
<dbReference type="FunFam" id="2.60.40.10:FF:000171">
    <property type="entry name" value="protein-glutamine gamma-glutamyltransferase 6"/>
    <property type="match status" value="1"/>
</dbReference>
<dbReference type="Gene3D" id="2.60.40.10">
    <property type="entry name" value="Immunoglobulins"/>
    <property type="match status" value="3"/>
</dbReference>
<dbReference type="Gene3D" id="3.90.260.10">
    <property type="entry name" value="Transglutaminase-like"/>
    <property type="match status" value="1"/>
</dbReference>
<dbReference type="InterPro" id="IPR013783">
    <property type="entry name" value="Ig-like_fold"/>
</dbReference>
<dbReference type="InterPro" id="IPR014756">
    <property type="entry name" value="Ig_E-set"/>
</dbReference>
<dbReference type="InterPro" id="IPR038765">
    <property type="entry name" value="Papain-like_cys_pep_sf"/>
</dbReference>
<dbReference type="InterPro" id="IPR050779">
    <property type="entry name" value="Transglutaminase"/>
</dbReference>
<dbReference type="InterPro" id="IPR002931">
    <property type="entry name" value="Transglutaminase-like"/>
</dbReference>
<dbReference type="InterPro" id="IPR036985">
    <property type="entry name" value="Transglutaminase-like_sf"/>
</dbReference>
<dbReference type="InterPro" id="IPR023608">
    <property type="entry name" value="Transglutaminase_animal"/>
</dbReference>
<dbReference type="InterPro" id="IPR013808">
    <property type="entry name" value="Transglutaminase_AS"/>
</dbReference>
<dbReference type="InterPro" id="IPR008958">
    <property type="entry name" value="Transglutaminase_C"/>
</dbReference>
<dbReference type="InterPro" id="IPR036238">
    <property type="entry name" value="Transglutaminase_C_sf"/>
</dbReference>
<dbReference type="InterPro" id="IPR001102">
    <property type="entry name" value="Transglutaminase_N"/>
</dbReference>
<dbReference type="PANTHER" id="PTHR11590">
    <property type="entry name" value="PROTEIN-GLUTAMINE GAMMA-GLUTAMYLTRANSFERASE"/>
    <property type="match status" value="1"/>
</dbReference>
<dbReference type="PANTHER" id="PTHR11590:SF36">
    <property type="entry name" value="PROTEIN-GLUTAMINE GAMMA-GLUTAMYLTRANSFERASE E"/>
    <property type="match status" value="1"/>
</dbReference>
<dbReference type="Pfam" id="PF00927">
    <property type="entry name" value="Transglut_C"/>
    <property type="match status" value="2"/>
</dbReference>
<dbReference type="Pfam" id="PF01841">
    <property type="entry name" value="Transglut_core"/>
    <property type="match status" value="1"/>
</dbReference>
<dbReference type="Pfam" id="PF00868">
    <property type="entry name" value="Transglut_N"/>
    <property type="match status" value="1"/>
</dbReference>
<dbReference type="PIRSF" id="PIRSF000459">
    <property type="entry name" value="TGM_EBP42"/>
    <property type="match status" value="1"/>
</dbReference>
<dbReference type="SMART" id="SM00460">
    <property type="entry name" value="TGc"/>
    <property type="match status" value="1"/>
</dbReference>
<dbReference type="SUPFAM" id="SSF54001">
    <property type="entry name" value="Cysteine proteinases"/>
    <property type="match status" value="1"/>
</dbReference>
<dbReference type="SUPFAM" id="SSF81296">
    <property type="entry name" value="E set domains"/>
    <property type="match status" value="1"/>
</dbReference>
<dbReference type="SUPFAM" id="SSF49309">
    <property type="entry name" value="Transglutaminase, two C-terminal domains"/>
    <property type="match status" value="2"/>
</dbReference>
<dbReference type="PROSITE" id="PS00547">
    <property type="entry name" value="TRANSGLUTAMINASES"/>
    <property type="match status" value="1"/>
</dbReference>
<gene>
    <name type="primary">TGM3</name>
</gene>